<feature type="chain" id="PRO_0000074483" description="General odorant-binding protein">
    <location>
        <begin position="1"/>
        <end position="24" status="greater than"/>
    </location>
</feature>
<feature type="non-terminal residue">
    <location>
        <position position="24"/>
    </location>
</feature>
<protein>
    <recommendedName>
        <fullName>General odorant-binding protein</fullName>
        <shortName>GOBP</shortName>
    </recommendedName>
</protein>
<dbReference type="GO" id="GO:0007608">
    <property type="term" value="P:sensory perception of smell"/>
    <property type="evidence" value="ECO:0007669"/>
    <property type="project" value="UniProtKB-KW"/>
</dbReference>
<evidence type="ECO:0000305" key="1"/>
<sequence>TAEVMSXVTAXFGXALEEXXDEXG</sequence>
<name>OBP_ANTPO</name>
<accession>P34169</accession>
<reference key="1">
    <citation type="journal article" date="1991" name="J. Neurobiol.">
        <title>Odorant-binding-protein subfamilies associate with distinct classes of olfactory receptor neurons in insects.</title>
        <authorList>
            <person name="Vogt R.G."/>
            <person name="Prestwich G.D."/>
            <person name="Lerner M.R."/>
        </authorList>
    </citation>
    <scope>PROTEIN SEQUENCE</scope>
</reference>
<keyword id="KW-0903">Direct protein sequencing</keyword>
<keyword id="KW-0552">Olfaction</keyword>
<keyword id="KW-0716">Sensory transduction</keyword>
<keyword id="KW-0813">Transport</keyword>
<organism>
    <name type="scientific">Antheraea polyphemus</name>
    <name type="common">Polyphemus moth</name>
    <dbReference type="NCBI Taxonomy" id="7120"/>
    <lineage>
        <taxon>Eukaryota</taxon>
        <taxon>Metazoa</taxon>
        <taxon>Ecdysozoa</taxon>
        <taxon>Arthropoda</taxon>
        <taxon>Hexapoda</taxon>
        <taxon>Insecta</taxon>
        <taxon>Pterygota</taxon>
        <taxon>Neoptera</taxon>
        <taxon>Endopterygota</taxon>
        <taxon>Lepidoptera</taxon>
        <taxon>Glossata</taxon>
        <taxon>Ditrysia</taxon>
        <taxon>Bombycoidea</taxon>
        <taxon>Saturniidae</taxon>
        <taxon>Saturniinae</taxon>
        <taxon>Saturniini</taxon>
        <taxon>Antheraea</taxon>
    </lineage>
</organism>
<comment type="function">
    <text>Present in the aqueous fluid surrounding olfactory sensory dendrites and are thought to aid in the capture and transport of hydrophobic odorants into and through this fluid.</text>
</comment>
<comment type="subunit">
    <text evidence="1">Homodimer.</text>
</comment>
<comment type="tissue specificity">
    <text>Antenna.</text>
</comment>
<comment type="similarity">
    <text evidence="1">Belongs to the PBP/GOBP family.</text>
</comment>
<proteinExistence type="evidence at protein level"/>